<proteinExistence type="inferred from homology"/>
<name>MTNB_LEPBJ</name>
<evidence type="ECO:0000255" key="1">
    <source>
        <dbReference type="HAMAP-Rule" id="MF_01677"/>
    </source>
</evidence>
<gene>
    <name evidence="1" type="primary">mtnB</name>
    <name type="ordered locus">LBJ_4218</name>
</gene>
<organism>
    <name type="scientific">Leptospira borgpetersenii serovar Hardjo-bovis (strain JB197)</name>
    <dbReference type="NCBI Taxonomy" id="355277"/>
    <lineage>
        <taxon>Bacteria</taxon>
        <taxon>Pseudomonadati</taxon>
        <taxon>Spirochaetota</taxon>
        <taxon>Spirochaetia</taxon>
        <taxon>Leptospirales</taxon>
        <taxon>Leptospiraceae</taxon>
        <taxon>Leptospira</taxon>
    </lineage>
</organism>
<protein>
    <recommendedName>
        <fullName evidence="1">Methylthioribulose-1-phosphate dehydratase</fullName>
        <shortName evidence="1">MTRu-1-P dehydratase</shortName>
        <ecNumber evidence="1">4.2.1.109</ecNumber>
    </recommendedName>
</protein>
<sequence length="250" mass="28079">MSVKKQLEKLSILGATYHKNGWMPGTAGNLSVRILGESGFWVSGSGLDKNTLNKRNFLYVDLKSGRLSPSKNTKVEKGLKPSAETSIHRAVYCALDDIGCGLHVHTLESNLIRTNTSQHRPVALLELPAIEILKVYGIWKESPKVYVPVIYNFPNVQDISDCLESYLKEYKPVVPFCIIEKHGITVWGKDTVQANRNLEATDFILKYMISSRNLSNPEGKKNFPTENNTSESDRQKVYVAEFPVYPATFL</sequence>
<feature type="chain" id="PRO_0000357088" description="Methylthioribulose-1-phosphate dehydratase">
    <location>
        <begin position="1"/>
        <end position="250"/>
    </location>
</feature>
<feature type="binding site" evidence="1">
    <location>
        <position position="103"/>
    </location>
    <ligand>
        <name>Zn(2+)</name>
        <dbReference type="ChEBI" id="CHEBI:29105"/>
    </ligand>
</feature>
<feature type="binding site" evidence="1">
    <location>
        <position position="105"/>
    </location>
    <ligand>
        <name>Zn(2+)</name>
        <dbReference type="ChEBI" id="CHEBI:29105"/>
    </ligand>
</feature>
<accession>Q04NC3</accession>
<dbReference type="EC" id="4.2.1.109" evidence="1"/>
<dbReference type="EMBL" id="CP000351">
    <property type="protein sequence ID" value="ABJ77597.1"/>
    <property type="molecule type" value="Genomic_DNA"/>
</dbReference>
<dbReference type="RefSeq" id="WP_011671396.1">
    <property type="nucleotide sequence ID" value="NC_008511.1"/>
</dbReference>
<dbReference type="SMR" id="Q04NC3"/>
<dbReference type="KEGG" id="lbj:LBJ_4218"/>
<dbReference type="HOGENOM" id="CLU_006033_4_1_12"/>
<dbReference type="UniPathway" id="UPA00904">
    <property type="reaction ID" value="UER00875"/>
</dbReference>
<dbReference type="Proteomes" id="UP000000656">
    <property type="component" value="Chromosome 2"/>
</dbReference>
<dbReference type="GO" id="GO:0005737">
    <property type="term" value="C:cytoplasm"/>
    <property type="evidence" value="ECO:0007669"/>
    <property type="project" value="InterPro"/>
</dbReference>
<dbReference type="GO" id="GO:0046570">
    <property type="term" value="F:methylthioribulose 1-phosphate dehydratase activity"/>
    <property type="evidence" value="ECO:0007669"/>
    <property type="project" value="UniProtKB-UniRule"/>
</dbReference>
<dbReference type="GO" id="GO:0008270">
    <property type="term" value="F:zinc ion binding"/>
    <property type="evidence" value="ECO:0007669"/>
    <property type="project" value="UniProtKB-UniRule"/>
</dbReference>
<dbReference type="GO" id="GO:0019509">
    <property type="term" value="P:L-methionine salvage from methylthioadenosine"/>
    <property type="evidence" value="ECO:0007669"/>
    <property type="project" value="UniProtKB-UniRule"/>
</dbReference>
<dbReference type="Gene3D" id="3.40.225.10">
    <property type="entry name" value="Class II aldolase/adducin N-terminal domain"/>
    <property type="match status" value="1"/>
</dbReference>
<dbReference type="HAMAP" id="MF_01677">
    <property type="entry name" value="Salvage_MtnB"/>
    <property type="match status" value="1"/>
</dbReference>
<dbReference type="InterPro" id="IPR001303">
    <property type="entry name" value="Aldolase_II/adducin_N"/>
</dbReference>
<dbReference type="InterPro" id="IPR036409">
    <property type="entry name" value="Aldolase_II/adducin_N_sf"/>
</dbReference>
<dbReference type="InterPro" id="IPR017714">
    <property type="entry name" value="MethylthioRu-1-P_deHdtase_MtnB"/>
</dbReference>
<dbReference type="NCBIfam" id="TIGR03328">
    <property type="entry name" value="salvage_mtnB"/>
    <property type="match status" value="1"/>
</dbReference>
<dbReference type="PANTHER" id="PTHR10640">
    <property type="entry name" value="METHYLTHIORIBULOSE-1-PHOSPHATE DEHYDRATASE"/>
    <property type="match status" value="1"/>
</dbReference>
<dbReference type="PANTHER" id="PTHR10640:SF7">
    <property type="entry name" value="METHYLTHIORIBULOSE-1-PHOSPHATE DEHYDRATASE"/>
    <property type="match status" value="1"/>
</dbReference>
<dbReference type="Pfam" id="PF00596">
    <property type="entry name" value="Aldolase_II"/>
    <property type="match status" value="1"/>
</dbReference>
<dbReference type="SMART" id="SM01007">
    <property type="entry name" value="Aldolase_II"/>
    <property type="match status" value="1"/>
</dbReference>
<dbReference type="SUPFAM" id="SSF53639">
    <property type="entry name" value="AraD/HMP-PK domain-like"/>
    <property type="match status" value="1"/>
</dbReference>
<reference key="1">
    <citation type="journal article" date="2006" name="Proc. Natl. Acad. Sci. U.S.A.">
        <title>Genome reduction in Leptospira borgpetersenii reflects limited transmission potential.</title>
        <authorList>
            <person name="Bulach D.M."/>
            <person name="Zuerner R.L."/>
            <person name="Wilson P."/>
            <person name="Seemann T."/>
            <person name="McGrath A."/>
            <person name="Cullen P.A."/>
            <person name="Davis J."/>
            <person name="Johnson M."/>
            <person name="Kuczek E."/>
            <person name="Alt D.P."/>
            <person name="Peterson-Burch B."/>
            <person name="Coppel R.L."/>
            <person name="Rood J.I."/>
            <person name="Davies J.K."/>
            <person name="Adler B."/>
        </authorList>
    </citation>
    <scope>NUCLEOTIDE SEQUENCE [LARGE SCALE GENOMIC DNA]</scope>
    <source>
        <strain>JB197</strain>
    </source>
</reference>
<comment type="function">
    <text evidence="1">Catalyzes the dehydration of methylthioribulose-1-phosphate (MTRu-1-P) into 2,3-diketo-5-methylthiopentyl-1-phosphate (DK-MTP-1-P).</text>
</comment>
<comment type="catalytic activity">
    <reaction evidence="1">
        <text>5-(methylsulfanyl)-D-ribulose 1-phosphate = 5-methylsulfanyl-2,3-dioxopentyl phosphate + H2O</text>
        <dbReference type="Rhea" id="RHEA:15549"/>
        <dbReference type="ChEBI" id="CHEBI:15377"/>
        <dbReference type="ChEBI" id="CHEBI:58548"/>
        <dbReference type="ChEBI" id="CHEBI:58828"/>
        <dbReference type="EC" id="4.2.1.109"/>
    </reaction>
</comment>
<comment type="cofactor">
    <cofactor evidence="1">
        <name>Zn(2+)</name>
        <dbReference type="ChEBI" id="CHEBI:29105"/>
    </cofactor>
    <text evidence="1">Binds 1 zinc ion per subunit.</text>
</comment>
<comment type="pathway">
    <text evidence="1">Amino-acid biosynthesis; L-methionine biosynthesis via salvage pathway; L-methionine from S-methyl-5-thio-alpha-D-ribose 1-phosphate: step 2/6.</text>
</comment>
<comment type="similarity">
    <text evidence="1">Belongs to the aldolase class II family. MtnB subfamily.</text>
</comment>
<keyword id="KW-0028">Amino-acid biosynthesis</keyword>
<keyword id="KW-0456">Lyase</keyword>
<keyword id="KW-0479">Metal-binding</keyword>
<keyword id="KW-0486">Methionine biosynthesis</keyword>
<keyword id="KW-0862">Zinc</keyword>